<accession>Q92XW1</accession>
<keyword id="KW-0067">ATP-binding</keyword>
<keyword id="KW-0997">Cell inner membrane</keyword>
<keyword id="KW-1003">Cell membrane</keyword>
<keyword id="KW-0472">Membrane</keyword>
<keyword id="KW-0547">Nucleotide-binding</keyword>
<keyword id="KW-0614">Plasmid</keyword>
<keyword id="KW-1185">Reference proteome</keyword>
<keyword id="KW-0764">Sulfate transport</keyword>
<keyword id="KW-1278">Translocase</keyword>
<keyword id="KW-0813">Transport</keyword>
<dbReference type="EC" id="7.3.2.3" evidence="1"/>
<dbReference type="EMBL" id="AE006469">
    <property type="protein sequence ID" value="AAK65787.1"/>
    <property type="molecule type" value="Genomic_DNA"/>
</dbReference>
<dbReference type="PIR" id="A95403">
    <property type="entry name" value="A95403"/>
</dbReference>
<dbReference type="RefSeq" id="NP_436375.1">
    <property type="nucleotide sequence ID" value="NC_003037.1"/>
</dbReference>
<dbReference type="RefSeq" id="WP_010968082.1">
    <property type="nucleotide sequence ID" value="NC_003037.1"/>
</dbReference>
<dbReference type="SMR" id="Q92XW1"/>
<dbReference type="EnsemblBacteria" id="AAK65787">
    <property type="protein sequence ID" value="AAK65787"/>
    <property type="gene ID" value="SMa2067"/>
</dbReference>
<dbReference type="KEGG" id="sme:SMa2067"/>
<dbReference type="PATRIC" id="fig|266834.11.peg.1179"/>
<dbReference type="HOGENOM" id="CLU_000604_1_1_5"/>
<dbReference type="OrthoDB" id="9802264at2"/>
<dbReference type="Proteomes" id="UP000001976">
    <property type="component" value="Plasmid pSymA"/>
</dbReference>
<dbReference type="GO" id="GO:0043190">
    <property type="term" value="C:ATP-binding cassette (ABC) transporter complex"/>
    <property type="evidence" value="ECO:0007669"/>
    <property type="project" value="InterPro"/>
</dbReference>
<dbReference type="GO" id="GO:0015419">
    <property type="term" value="F:ABC-type sulfate transporter activity"/>
    <property type="evidence" value="ECO:0007669"/>
    <property type="project" value="InterPro"/>
</dbReference>
<dbReference type="GO" id="GO:0102025">
    <property type="term" value="F:ABC-type thiosulfate transporter activity"/>
    <property type="evidence" value="ECO:0007669"/>
    <property type="project" value="RHEA"/>
</dbReference>
<dbReference type="GO" id="GO:0005524">
    <property type="term" value="F:ATP binding"/>
    <property type="evidence" value="ECO:0007669"/>
    <property type="project" value="UniProtKB-KW"/>
</dbReference>
<dbReference type="GO" id="GO:0016887">
    <property type="term" value="F:ATP hydrolysis activity"/>
    <property type="evidence" value="ECO:0007669"/>
    <property type="project" value="InterPro"/>
</dbReference>
<dbReference type="CDD" id="cd03296">
    <property type="entry name" value="ABC_CysA_sulfate_importer"/>
    <property type="match status" value="1"/>
</dbReference>
<dbReference type="FunFam" id="3.40.50.300:FF:000425">
    <property type="entry name" value="Probable ABC transporter, ATP-binding subunit"/>
    <property type="match status" value="1"/>
</dbReference>
<dbReference type="Gene3D" id="3.40.50.300">
    <property type="entry name" value="P-loop containing nucleotide triphosphate hydrolases"/>
    <property type="match status" value="1"/>
</dbReference>
<dbReference type="InterPro" id="IPR003593">
    <property type="entry name" value="AAA+_ATPase"/>
</dbReference>
<dbReference type="InterPro" id="IPR050093">
    <property type="entry name" value="ABC_SmlMolc_Importer"/>
</dbReference>
<dbReference type="InterPro" id="IPR003439">
    <property type="entry name" value="ABC_transporter-like_ATP-bd"/>
</dbReference>
<dbReference type="InterPro" id="IPR017871">
    <property type="entry name" value="ABC_transporter-like_CS"/>
</dbReference>
<dbReference type="InterPro" id="IPR008995">
    <property type="entry name" value="Mo/tungstate-bd_C_term_dom"/>
</dbReference>
<dbReference type="InterPro" id="IPR027417">
    <property type="entry name" value="P-loop_NTPase"/>
</dbReference>
<dbReference type="InterPro" id="IPR005666">
    <property type="entry name" value="Sulph_transpt1"/>
</dbReference>
<dbReference type="InterPro" id="IPR024765">
    <property type="entry name" value="TOBE-like"/>
</dbReference>
<dbReference type="NCBIfam" id="TIGR00968">
    <property type="entry name" value="3a0106s01"/>
    <property type="match status" value="1"/>
</dbReference>
<dbReference type="PANTHER" id="PTHR42781">
    <property type="entry name" value="SPERMIDINE/PUTRESCINE IMPORT ATP-BINDING PROTEIN POTA"/>
    <property type="match status" value="1"/>
</dbReference>
<dbReference type="PANTHER" id="PTHR42781:SF4">
    <property type="entry name" value="SPERMIDINE_PUTRESCINE IMPORT ATP-BINDING PROTEIN POTA"/>
    <property type="match status" value="1"/>
</dbReference>
<dbReference type="Pfam" id="PF00005">
    <property type="entry name" value="ABC_tran"/>
    <property type="match status" value="1"/>
</dbReference>
<dbReference type="Pfam" id="PF12857">
    <property type="entry name" value="TOBE_3"/>
    <property type="match status" value="1"/>
</dbReference>
<dbReference type="SMART" id="SM00382">
    <property type="entry name" value="AAA"/>
    <property type="match status" value="1"/>
</dbReference>
<dbReference type="SUPFAM" id="SSF50331">
    <property type="entry name" value="MOP-like"/>
    <property type="match status" value="1"/>
</dbReference>
<dbReference type="SUPFAM" id="SSF52540">
    <property type="entry name" value="P-loop containing nucleoside triphosphate hydrolases"/>
    <property type="match status" value="1"/>
</dbReference>
<dbReference type="PROSITE" id="PS00211">
    <property type="entry name" value="ABC_TRANSPORTER_1"/>
    <property type="match status" value="1"/>
</dbReference>
<dbReference type="PROSITE" id="PS50893">
    <property type="entry name" value="ABC_TRANSPORTER_2"/>
    <property type="match status" value="1"/>
</dbReference>
<dbReference type="PROSITE" id="PS51237">
    <property type="entry name" value="CYSA"/>
    <property type="match status" value="1"/>
</dbReference>
<feature type="chain" id="PRO_0000092287" description="Sulfate/thiosulfate import ATP-binding protein CysA 1">
    <location>
        <begin position="1"/>
        <end position="347"/>
    </location>
</feature>
<feature type="domain" description="ABC transporter" evidence="1">
    <location>
        <begin position="3"/>
        <end position="237"/>
    </location>
</feature>
<feature type="binding site" evidence="1">
    <location>
        <begin position="35"/>
        <end position="42"/>
    </location>
    <ligand>
        <name>ATP</name>
        <dbReference type="ChEBI" id="CHEBI:30616"/>
    </ligand>
</feature>
<sequence>MEVRVESLRKEFGRFPALVDVTLDILSGELIALLGPSGSGKTTLLRLIAGLESPTEGMIFFGDEDASKRTVQERNIGFVFQHYALFRHMTVLDNVTFGLKVRPANRRPPAAEIRRRALDLIDLVQLSGLEKRYPAQLSGGQRQRVALARAMAVEPSVLLLDEPFGALDAQVRKELRRWLREIHDRTGYTTLFVTHDQEEALELADRVVVMSKGAIEQVGTPDEIYDHPVSPFVYGFIGQSNCLNVTLANGEIWFEGRPIGLRAANEPDGQATLFFRPHDVELIEGGSGCLAGRVTASRRVAGTRHLELDLGKTQSSIEVELPPELASSADRTRIALRPTKWKLFCGE</sequence>
<comment type="function">
    <text evidence="1">Part of the ABC transporter complex CysAWTP involved in sulfate/thiosulfate import. Responsible for energy coupling to the transport system.</text>
</comment>
<comment type="catalytic activity">
    <reaction evidence="1">
        <text>sulfate(out) + ATP + H2O = sulfate(in) + ADP + phosphate + H(+)</text>
        <dbReference type="Rhea" id="RHEA:10192"/>
        <dbReference type="ChEBI" id="CHEBI:15377"/>
        <dbReference type="ChEBI" id="CHEBI:15378"/>
        <dbReference type="ChEBI" id="CHEBI:16189"/>
        <dbReference type="ChEBI" id="CHEBI:30616"/>
        <dbReference type="ChEBI" id="CHEBI:43474"/>
        <dbReference type="ChEBI" id="CHEBI:456216"/>
        <dbReference type="EC" id="7.3.2.3"/>
    </reaction>
</comment>
<comment type="catalytic activity">
    <reaction evidence="1">
        <text>thiosulfate(out) + ATP + H2O = thiosulfate(in) + ADP + phosphate + H(+)</text>
        <dbReference type="Rhea" id="RHEA:29871"/>
        <dbReference type="ChEBI" id="CHEBI:15377"/>
        <dbReference type="ChEBI" id="CHEBI:15378"/>
        <dbReference type="ChEBI" id="CHEBI:30616"/>
        <dbReference type="ChEBI" id="CHEBI:33542"/>
        <dbReference type="ChEBI" id="CHEBI:43474"/>
        <dbReference type="ChEBI" id="CHEBI:456216"/>
        <dbReference type="EC" id="7.3.2.3"/>
    </reaction>
</comment>
<comment type="subunit">
    <text evidence="1">The complex is composed of two ATP-binding proteins (CysA), two transmembrane proteins (CysT and CysW) and a solute-binding protein (CysP).</text>
</comment>
<comment type="subcellular location">
    <subcellularLocation>
        <location evidence="1">Cell inner membrane</location>
        <topology evidence="1">Peripheral membrane protein</topology>
    </subcellularLocation>
</comment>
<comment type="similarity">
    <text evidence="1">Belongs to the ABC transporter superfamily. Sulfate/tungstate importer (TC 3.A.1.6) family.</text>
</comment>
<gene>
    <name evidence="1" type="primary">cysA1</name>
    <name type="ordered locus">RA1129</name>
    <name type="ORF">SMa2067</name>
</gene>
<organism>
    <name type="scientific">Rhizobium meliloti (strain 1021)</name>
    <name type="common">Ensifer meliloti</name>
    <name type="synonym">Sinorhizobium meliloti</name>
    <dbReference type="NCBI Taxonomy" id="266834"/>
    <lineage>
        <taxon>Bacteria</taxon>
        <taxon>Pseudomonadati</taxon>
        <taxon>Pseudomonadota</taxon>
        <taxon>Alphaproteobacteria</taxon>
        <taxon>Hyphomicrobiales</taxon>
        <taxon>Rhizobiaceae</taxon>
        <taxon>Sinorhizobium/Ensifer group</taxon>
        <taxon>Sinorhizobium</taxon>
    </lineage>
</organism>
<evidence type="ECO:0000255" key="1">
    <source>
        <dbReference type="HAMAP-Rule" id="MF_01701"/>
    </source>
</evidence>
<reference key="1">
    <citation type="journal article" date="2001" name="Proc. Natl. Acad. Sci. U.S.A.">
        <title>Nucleotide sequence and predicted functions of the entire Sinorhizobium meliloti pSymA megaplasmid.</title>
        <authorList>
            <person name="Barnett M.J."/>
            <person name="Fisher R.F."/>
            <person name="Jones T."/>
            <person name="Komp C."/>
            <person name="Abola A.P."/>
            <person name="Barloy-Hubler F."/>
            <person name="Bowser L."/>
            <person name="Capela D."/>
            <person name="Galibert F."/>
            <person name="Gouzy J."/>
            <person name="Gurjal M."/>
            <person name="Hong A."/>
            <person name="Huizar L."/>
            <person name="Hyman R.W."/>
            <person name="Kahn D."/>
            <person name="Kahn M.L."/>
            <person name="Kalman S."/>
            <person name="Keating D.H."/>
            <person name="Palm C."/>
            <person name="Peck M.C."/>
            <person name="Surzycki R."/>
            <person name="Wells D.H."/>
            <person name="Yeh K.-C."/>
            <person name="Davis R.W."/>
            <person name="Federspiel N.A."/>
            <person name="Long S.R."/>
        </authorList>
    </citation>
    <scope>NUCLEOTIDE SEQUENCE [LARGE SCALE GENOMIC DNA]</scope>
    <source>
        <strain>1021</strain>
    </source>
</reference>
<reference key="2">
    <citation type="journal article" date="2001" name="Science">
        <title>The composite genome of the legume symbiont Sinorhizobium meliloti.</title>
        <authorList>
            <person name="Galibert F."/>
            <person name="Finan T.M."/>
            <person name="Long S.R."/>
            <person name="Puehler A."/>
            <person name="Abola P."/>
            <person name="Ampe F."/>
            <person name="Barloy-Hubler F."/>
            <person name="Barnett M.J."/>
            <person name="Becker A."/>
            <person name="Boistard P."/>
            <person name="Bothe G."/>
            <person name="Boutry M."/>
            <person name="Bowser L."/>
            <person name="Buhrmester J."/>
            <person name="Cadieu E."/>
            <person name="Capela D."/>
            <person name="Chain P."/>
            <person name="Cowie A."/>
            <person name="Davis R.W."/>
            <person name="Dreano S."/>
            <person name="Federspiel N.A."/>
            <person name="Fisher R.F."/>
            <person name="Gloux S."/>
            <person name="Godrie T."/>
            <person name="Goffeau A."/>
            <person name="Golding B."/>
            <person name="Gouzy J."/>
            <person name="Gurjal M."/>
            <person name="Hernandez-Lucas I."/>
            <person name="Hong A."/>
            <person name="Huizar L."/>
            <person name="Hyman R.W."/>
            <person name="Jones T."/>
            <person name="Kahn D."/>
            <person name="Kahn M.L."/>
            <person name="Kalman S."/>
            <person name="Keating D.H."/>
            <person name="Kiss E."/>
            <person name="Komp C."/>
            <person name="Lelaure V."/>
            <person name="Masuy D."/>
            <person name="Palm C."/>
            <person name="Peck M.C."/>
            <person name="Pohl T.M."/>
            <person name="Portetelle D."/>
            <person name="Purnelle B."/>
            <person name="Ramsperger U."/>
            <person name="Surzycki R."/>
            <person name="Thebault P."/>
            <person name="Vandenbol M."/>
            <person name="Vorhoelter F.J."/>
            <person name="Weidner S."/>
            <person name="Wells D.H."/>
            <person name="Wong K."/>
            <person name="Yeh K.-C."/>
            <person name="Batut J."/>
        </authorList>
    </citation>
    <scope>NUCLEOTIDE SEQUENCE [LARGE SCALE GENOMIC DNA]</scope>
    <source>
        <strain>1021</strain>
    </source>
</reference>
<name>CYSA1_RHIME</name>
<proteinExistence type="inferred from homology"/>
<protein>
    <recommendedName>
        <fullName evidence="1">Sulfate/thiosulfate import ATP-binding protein CysA 1</fullName>
        <ecNumber evidence="1">7.3.2.3</ecNumber>
    </recommendedName>
    <alternativeName>
        <fullName evidence="1">Sulfate-transporting ATPase 1</fullName>
    </alternativeName>
</protein>
<geneLocation type="plasmid">
    <name>pSymA</name>
    <name>megaplasmid 1</name>
</geneLocation>